<name>SH3R1_PONAB</name>
<sequence>MDESALLDLLECPVCLERLDASAKVLPCQHTFCKRCLLGIVGSRNELRCPECRTLVGSGVEELPSNILLVRLLDGIKQRPWKPGPGGGSGTNCTNALRSQSSTVANCSSKDLQSSQGGQQPRVQAWSPPVRGIPQLPCAKALYNYEGKEPGDLKFSKGDIIILRRQVDENWYHGEVNGIHGFFPTNFVQIIKPLPQPPPQCKALYDFEVKDKEADKDCLPFAKDDVLTVIRRVDENWAEGMLADKIGIFPISYVEFNSAAKQLIEWDKPPVPGVDAGECSSAAAQSSTAPKHSDTKKNTKKRHSFTSLTMANKSSQASQNRHSMEISPPVLISSSNPTAAARISELSGLSCSAPSQVHISTTGLIVTPPPSSPVTTGPSFTFPSDVPYQATLGTLNPPLLPPPLLAATVLASTPPGAAAAAAAAGMGPRPMAGSTDQIAHLRPQTRPSVYVAIYPYTPRKEDELELRKGEMFLVFERCQDGWFKGTSMHTSKIGVFPGNYVAPVTRAVTNASQAKVPMSTAGQTSRGVTMVSPSTAGGPAQKLQGNGVAGSPSVVPTAVVSAAHIQTSPQAKVLLHMTGQMTVNQARNAVRTVAAHNQERPTAAVTPIQVQNAAGLSPASVGLPHHSLASPQPAPLMPGSATHTAAISISRASAPLACAAAAPLTSSSITSASLEAEPSGRIVTVLPGLPTSPDSASLACGNSSATKPDKDSKKEKKGLLKLLSGASTKRKPRVSPPASPTLEVELGSAELPLHGAVGPELPPGGGHGRAGSCPVDGDGPVTTAVAGAALAQDAFHRKASSLDSAVPIAPPPRQACSSLGPVLNESRPVVCERHRVVVSYPPQSEAELELKEGDIVFVHKKREDGWFKGTLQRNGKTGLFPGSFVENI</sequence>
<comment type="function">
    <text evidence="2 4">Has E3 ubiquitin-protein ligase activity. In the absence of an external substrate, it can catalyze self-ubiquitination. Stimulates ubiquitination of potassium channel KCNJ1, enhancing it's dynamin-dependent and clathrin-independent endocytosis. Acts as a scaffold protein that coordinates with MAPK8IP1/JIP1 in organizing different components of the JNK pathway, including RAC1 or RAC2, MAP3K11/MLK3 or MAP3K7/TAK1, MAP2K7/MKK7, MAPK8/JNK1 and/or MAPK9/JNK2 into a functional multiprotein complex to ensure the effective activation of the JNK signaling pathway. Regulates the differentiation of CD4(+) and CD8(+) T-cells and promotes T-helper 1 (Th1) cell differentiation. Regulates the activation of MAPK8/JNK1 and MAPK9/JNK2 in CD4(+) T-cells and the activation of MAPK8/JNK1 in CD8(+) T-cells. Controls proper cortical neuronal migration and the formation of proximal cytoplasmic dilation in the leading process (PCDLP) in migratory neocortical neurons by regulating the proper localization of activated RAC1 and F-actin assembly.</text>
</comment>
<comment type="catalytic activity">
    <reaction evidence="4">
        <text>S-ubiquitinyl-[E2 ubiquitin-conjugating enzyme]-L-cysteine + [acceptor protein]-L-lysine = [E2 ubiquitin-conjugating enzyme]-L-cysteine + N(6)-ubiquitinyl-[acceptor protein]-L-lysine.</text>
        <dbReference type="EC" id="2.3.2.27"/>
    </reaction>
</comment>
<comment type="pathway">
    <text>Protein modification; protein ubiquitination.</text>
</comment>
<comment type="subunit">
    <text evidence="2 3 4">Interacts with HERP1. Interacts with RAC1; in a GTP-dependent manner. Interacts with MAP3K10/MLK2 and MAP3K11/MLK3. Interacts with MAPK8IP; this interaction leads to the PJAC complex (POSH-JIP or SH3RF1/MAPK8IP apoptotic complex) with a 1:1 ratio. Interacts with SIAH1. Probably part of a signaling complex that may contain SH3RF1, MAPK8IP, DLK1, MAP2K4/MKK4, MAP2K7/MKK7, MAPK8/JNK1, MAPK9/JNK2, AKT1 and AKT2. Found in a complex with RAC2, MAP3K7/TAK1, MAP2K7/MKK7, MAPK8IP1/JIP1, MAPK8/JNK1 and MAPK9/JNK2. Found in a complex with RAC1, MAP3K11/MLK3, MAP2K7/MKK7, MAPK8IP1/JIP1 and MAPK8/JNK1. Interacts with SH3RF2.</text>
</comment>
<comment type="subcellular location">
    <subcellularLocation>
        <location evidence="3">Cytoplasm</location>
        <location evidence="3">Perinuclear region</location>
    </subcellularLocation>
    <subcellularLocation>
        <location evidence="2">Cell projection</location>
        <location evidence="2">Lamellipodium</location>
    </subcellularLocation>
    <subcellularLocation>
        <location evidence="2">Golgi apparatus</location>
        <location evidence="2">trans-Golgi network</location>
    </subcellularLocation>
    <text evidence="2 4">Colocalizes, with AKT2, in lamellipodia. Colocalizes, with HERP1, in trans-Golgi network.</text>
</comment>
<comment type="domain">
    <text evidence="4">The RING finger domain is required for ubiquitin ligase activity and autoubiquitination.</text>
</comment>
<comment type="PTM">
    <text evidence="4">Phosphorylated at Ser-304 by AKT1 and AKT2. When phosphorylated, it has reduced ability to bind Rac.</text>
</comment>
<comment type="PTM">
    <text evidence="3">Autoubiquitinated. Ubiquitinated by SH3RF2, leading to proteasome-mediated degradation.</text>
</comment>
<comment type="similarity">
    <text evidence="8">Belongs to the SH3RF family.</text>
</comment>
<accession>Q5RBR0</accession>
<gene>
    <name type="primary">SH3RF1</name>
    <name type="synonym">POSH</name>
    <name evidence="4" type="synonym">POSH1</name>
</gene>
<organism>
    <name type="scientific">Pongo abelii</name>
    <name type="common">Sumatran orangutan</name>
    <name type="synonym">Pongo pygmaeus abelii</name>
    <dbReference type="NCBI Taxonomy" id="9601"/>
    <lineage>
        <taxon>Eukaryota</taxon>
        <taxon>Metazoa</taxon>
        <taxon>Chordata</taxon>
        <taxon>Craniata</taxon>
        <taxon>Vertebrata</taxon>
        <taxon>Euteleostomi</taxon>
        <taxon>Mammalia</taxon>
        <taxon>Eutheria</taxon>
        <taxon>Euarchontoglires</taxon>
        <taxon>Primates</taxon>
        <taxon>Haplorrhini</taxon>
        <taxon>Catarrhini</taxon>
        <taxon>Hominidae</taxon>
        <taxon>Pongo</taxon>
    </lineage>
</organism>
<reference key="1">
    <citation type="submission" date="2004-11" db="EMBL/GenBank/DDBJ databases">
        <authorList>
            <consortium name="The German cDNA consortium"/>
        </authorList>
    </citation>
    <scope>NUCLEOTIDE SEQUENCE [LARGE SCALE MRNA]</scope>
    <source>
        <tissue>Kidney</tissue>
    </source>
</reference>
<dbReference type="EC" id="2.3.2.27" evidence="4"/>
<dbReference type="EMBL" id="CR858578">
    <property type="protein sequence ID" value="CAH90800.1"/>
    <property type="molecule type" value="mRNA"/>
</dbReference>
<dbReference type="RefSeq" id="NP_001125455.1">
    <property type="nucleotide sequence ID" value="NM_001131983.1"/>
</dbReference>
<dbReference type="SMR" id="Q5RBR0"/>
<dbReference type="FunCoup" id="Q5RBR0">
    <property type="interactions" value="550"/>
</dbReference>
<dbReference type="STRING" id="9601.ENSPPYP00000016972"/>
<dbReference type="GeneID" id="100172363"/>
<dbReference type="KEGG" id="pon:100172363"/>
<dbReference type="CTD" id="57630"/>
<dbReference type="eggNOG" id="KOG2177">
    <property type="taxonomic scope" value="Eukaryota"/>
</dbReference>
<dbReference type="InParanoid" id="Q5RBR0"/>
<dbReference type="OrthoDB" id="19092at2759"/>
<dbReference type="UniPathway" id="UPA00143"/>
<dbReference type="Proteomes" id="UP000001595">
    <property type="component" value="Unplaced"/>
</dbReference>
<dbReference type="GO" id="GO:0005794">
    <property type="term" value="C:Golgi apparatus"/>
    <property type="evidence" value="ECO:0007669"/>
    <property type="project" value="UniProtKB-SubCell"/>
</dbReference>
<dbReference type="GO" id="GO:0030027">
    <property type="term" value="C:lamellipodium"/>
    <property type="evidence" value="ECO:0000250"/>
    <property type="project" value="UniProtKB"/>
</dbReference>
<dbReference type="GO" id="GO:0048471">
    <property type="term" value="C:perinuclear region of cytoplasm"/>
    <property type="evidence" value="ECO:0007669"/>
    <property type="project" value="UniProtKB-SubCell"/>
</dbReference>
<dbReference type="GO" id="GO:0005078">
    <property type="term" value="F:MAP-kinase scaffold activity"/>
    <property type="evidence" value="ECO:0000250"/>
    <property type="project" value="UniProtKB"/>
</dbReference>
<dbReference type="GO" id="GO:0061630">
    <property type="term" value="F:ubiquitin protein ligase activity"/>
    <property type="evidence" value="ECO:0000250"/>
    <property type="project" value="UniProtKB"/>
</dbReference>
<dbReference type="GO" id="GO:0008270">
    <property type="term" value="F:zinc ion binding"/>
    <property type="evidence" value="ECO:0007669"/>
    <property type="project" value="UniProtKB-KW"/>
</dbReference>
<dbReference type="GO" id="GO:0001764">
    <property type="term" value="P:neuron migration"/>
    <property type="evidence" value="ECO:0000250"/>
    <property type="project" value="UniProtKB"/>
</dbReference>
<dbReference type="GO" id="GO:0046330">
    <property type="term" value="P:positive regulation of JNK cascade"/>
    <property type="evidence" value="ECO:0000250"/>
    <property type="project" value="UniProtKB"/>
</dbReference>
<dbReference type="GO" id="GO:0051865">
    <property type="term" value="P:protein autoubiquitination"/>
    <property type="evidence" value="ECO:0000250"/>
    <property type="project" value="UniProtKB"/>
</dbReference>
<dbReference type="GO" id="GO:0043370">
    <property type="term" value="P:regulation of CD4-positive, alpha-beta T cell differentiation"/>
    <property type="evidence" value="ECO:0000250"/>
    <property type="project" value="UniProtKB"/>
</dbReference>
<dbReference type="GO" id="GO:2000564">
    <property type="term" value="P:regulation of CD8-positive, alpha-beta T cell proliferation"/>
    <property type="evidence" value="ECO:0000250"/>
    <property type="project" value="UniProtKB"/>
</dbReference>
<dbReference type="CDD" id="cd16748">
    <property type="entry name" value="RING-HC_SH3RF1"/>
    <property type="match status" value="1"/>
</dbReference>
<dbReference type="CDD" id="cd11930">
    <property type="entry name" value="SH3_SH3RF1_2"/>
    <property type="match status" value="1"/>
</dbReference>
<dbReference type="CDD" id="cd11926">
    <property type="entry name" value="SH3_SH3RF1_3"/>
    <property type="match status" value="1"/>
</dbReference>
<dbReference type="CDD" id="cd11785">
    <property type="entry name" value="SH3_SH3RF_C"/>
    <property type="match status" value="1"/>
</dbReference>
<dbReference type="FunFam" id="3.30.40.10:FF:000077">
    <property type="entry name" value="E3 ubiquitin-protein ligase SH3RF1 isoform X1"/>
    <property type="match status" value="1"/>
</dbReference>
<dbReference type="FunFam" id="2.30.30.40:FF:000063">
    <property type="entry name" value="Putative E3 ubiquitin-protein ligase SH3RF1"/>
    <property type="match status" value="1"/>
</dbReference>
<dbReference type="FunFam" id="2.30.30.40:FF:000091">
    <property type="entry name" value="Putative E3 ubiquitin-protein ligase SH3RF1"/>
    <property type="match status" value="1"/>
</dbReference>
<dbReference type="FunFam" id="2.30.30.40:FF:000118">
    <property type="entry name" value="Putative E3 ubiquitin-protein ligase SH3RF1"/>
    <property type="match status" value="1"/>
</dbReference>
<dbReference type="FunFam" id="2.30.30.40:FF:000001">
    <property type="entry name" value="Sorbin and SH3 domain-containing protein 1 isoform 2"/>
    <property type="match status" value="1"/>
</dbReference>
<dbReference type="Gene3D" id="2.30.30.40">
    <property type="entry name" value="SH3 Domains"/>
    <property type="match status" value="4"/>
</dbReference>
<dbReference type="Gene3D" id="3.30.40.10">
    <property type="entry name" value="Zinc/RING finger domain, C3HC4 (zinc finger)"/>
    <property type="match status" value="1"/>
</dbReference>
<dbReference type="InterPro" id="IPR050384">
    <property type="entry name" value="Endophilin_SH3RF"/>
</dbReference>
<dbReference type="InterPro" id="IPR036028">
    <property type="entry name" value="SH3-like_dom_sf"/>
</dbReference>
<dbReference type="InterPro" id="IPR001452">
    <property type="entry name" value="SH3_domain"/>
</dbReference>
<dbReference type="InterPro" id="IPR035816">
    <property type="entry name" value="SH3RF1/SH3RF3_SH3_4"/>
</dbReference>
<dbReference type="InterPro" id="IPR035795">
    <property type="entry name" value="SH3RF1_SH3_2"/>
</dbReference>
<dbReference type="InterPro" id="IPR001841">
    <property type="entry name" value="Znf_RING"/>
</dbReference>
<dbReference type="InterPro" id="IPR013083">
    <property type="entry name" value="Znf_RING/FYVE/PHD"/>
</dbReference>
<dbReference type="InterPro" id="IPR017907">
    <property type="entry name" value="Znf_RING_CS"/>
</dbReference>
<dbReference type="PANTHER" id="PTHR14167:SF116">
    <property type="entry name" value="CAP, ISOFORM AC"/>
    <property type="match status" value="1"/>
</dbReference>
<dbReference type="PANTHER" id="PTHR14167">
    <property type="entry name" value="SH3 DOMAIN-CONTAINING"/>
    <property type="match status" value="1"/>
</dbReference>
<dbReference type="Pfam" id="PF00018">
    <property type="entry name" value="SH3_1"/>
    <property type="match status" value="2"/>
</dbReference>
<dbReference type="Pfam" id="PF14604">
    <property type="entry name" value="SH3_9"/>
    <property type="match status" value="2"/>
</dbReference>
<dbReference type="Pfam" id="PF13923">
    <property type="entry name" value="zf-C3HC4_2"/>
    <property type="match status" value="1"/>
</dbReference>
<dbReference type="PRINTS" id="PR00499">
    <property type="entry name" value="P67PHOX"/>
</dbReference>
<dbReference type="PRINTS" id="PR00452">
    <property type="entry name" value="SH3DOMAIN"/>
</dbReference>
<dbReference type="SMART" id="SM00184">
    <property type="entry name" value="RING"/>
    <property type="match status" value="1"/>
</dbReference>
<dbReference type="SMART" id="SM00326">
    <property type="entry name" value="SH3"/>
    <property type="match status" value="4"/>
</dbReference>
<dbReference type="SUPFAM" id="SSF57850">
    <property type="entry name" value="RING/U-box"/>
    <property type="match status" value="1"/>
</dbReference>
<dbReference type="SUPFAM" id="SSF50044">
    <property type="entry name" value="SH3-domain"/>
    <property type="match status" value="4"/>
</dbReference>
<dbReference type="PROSITE" id="PS50002">
    <property type="entry name" value="SH3"/>
    <property type="match status" value="4"/>
</dbReference>
<dbReference type="PROSITE" id="PS00518">
    <property type="entry name" value="ZF_RING_1"/>
    <property type="match status" value="1"/>
</dbReference>
<dbReference type="PROSITE" id="PS50089">
    <property type="entry name" value="ZF_RING_2"/>
    <property type="match status" value="1"/>
</dbReference>
<evidence type="ECO:0000250" key="1"/>
<evidence type="ECO:0000250" key="2">
    <source>
        <dbReference type="UniProtKB" id="Q69ZI1"/>
    </source>
</evidence>
<evidence type="ECO:0000250" key="3">
    <source>
        <dbReference type="UniProtKB" id="Q71F54"/>
    </source>
</evidence>
<evidence type="ECO:0000250" key="4">
    <source>
        <dbReference type="UniProtKB" id="Q7Z6J0"/>
    </source>
</evidence>
<evidence type="ECO:0000255" key="5">
    <source>
        <dbReference type="PROSITE-ProRule" id="PRU00175"/>
    </source>
</evidence>
<evidence type="ECO:0000255" key="6">
    <source>
        <dbReference type="PROSITE-ProRule" id="PRU00192"/>
    </source>
</evidence>
<evidence type="ECO:0000256" key="7">
    <source>
        <dbReference type="SAM" id="MobiDB-lite"/>
    </source>
</evidence>
<evidence type="ECO:0000305" key="8"/>
<keyword id="KW-0966">Cell projection</keyword>
<keyword id="KW-0963">Cytoplasm</keyword>
<keyword id="KW-0333">Golgi apparatus</keyword>
<keyword id="KW-0479">Metal-binding</keyword>
<keyword id="KW-0597">Phosphoprotein</keyword>
<keyword id="KW-1185">Reference proteome</keyword>
<keyword id="KW-0677">Repeat</keyword>
<keyword id="KW-0728">SH3 domain</keyword>
<keyword id="KW-0808">Transferase</keyword>
<keyword id="KW-0832">Ubl conjugation</keyword>
<keyword id="KW-0833">Ubl conjugation pathway</keyword>
<keyword id="KW-0862">Zinc</keyword>
<keyword id="KW-0863">Zinc-finger</keyword>
<protein>
    <recommendedName>
        <fullName>E3 ubiquitin-protein ligase SH3RF1</fullName>
        <ecNumber evidence="4">2.3.2.27</ecNumber>
    </recommendedName>
    <alternativeName>
        <fullName>Plenty of SH3s</fullName>
        <shortName>Protein POSH</shortName>
    </alternativeName>
    <alternativeName>
        <fullName evidence="8">RING-type E3 ubiquitin transferase SH3RF1</fullName>
    </alternativeName>
    <alternativeName>
        <fullName>SH3 domain-containing RING finger protein 1</fullName>
    </alternativeName>
</protein>
<proteinExistence type="evidence at transcript level"/>
<feature type="chain" id="PRO_0000334153" description="E3 ubiquitin-protein ligase SH3RF1">
    <location>
        <begin position="1"/>
        <end position="888"/>
    </location>
</feature>
<feature type="domain" description="SH3 1" evidence="6">
    <location>
        <begin position="134"/>
        <end position="193"/>
    </location>
</feature>
<feature type="domain" description="SH3 2" evidence="6">
    <location>
        <begin position="196"/>
        <end position="259"/>
    </location>
</feature>
<feature type="domain" description="SH3 3" evidence="6">
    <location>
        <begin position="445"/>
        <end position="506"/>
    </location>
</feature>
<feature type="domain" description="SH3 4" evidence="6">
    <location>
        <begin position="829"/>
        <end position="888"/>
    </location>
</feature>
<feature type="zinc finger region" description="RING-type" evidence="5">
    <location>
        <begin position="12"/>
        <end position="53"/>
    </location>
</feature>
<feature type="region of interest" description="Disordered" evidence="7">
    <location>
        <begin position="275"/>
        <end position="321"/>
    </location>
</feature>
<feature type="region of interest" description="Interaction with RAC1" evidence="4">
    <location>
        <begin position="292"/>
        <end position="362"/>
    </location>
</feature>
<feature type="region of interest" description="Interaction with AKT2" evidence="1">
    <location>
        <begin position="440"/>
        <end position="543"/>
    </location>
</feature>
<feature type="region of interest" description="Disordered" evidence="7">
    <location>
        <begin position="516"/>
        <end position="549"/>
    </location>
</feature>
<feature type="region of interest" description="Disordered" evidence="7">
    <location>
        <begin position="617"/>
        <end position="637"/>
    </location>
</feature>
<feature type="region of interest" description="Disordered" evidence="7">
    <location>
        <begin position="693"/>
        <end position="741"/>
    </location>
</feature>
<feature type="compositionally biased region" description="Polar residues" evidence="7">
    <location>
        <begin position="305"/>
        <end position="321"/>
    </location>
</feature>
<feature type="compositionally biased region" description="Polar residues" evidence="7">
    <location>
        <begin position="520"/>
        <end position="535"/>
    </location>
</feature>
<feature type="compositionally biased region" description="Polar residues" evidence="7">
    <location>
        <begin position="693"/>
        <end position="704"/>
    </location>
</feature>
<feature type="compositionally biased region" description="Basic and acidic residues" evidence="7">
    <location>
        <begin position="707"/>
        <end position="718"/>
    </location>
</feature>
<feature type="modified residue" description="Phosphoserine" evidence="4">
    <location>
        <position position="304"/>
    </location>
</feature>
<feature type="modified residue" description="Phosphoserine" evidence="4">
    <location>
        <position position="532"/>
    </location>
</feature>
<feature type="modified residue" description="Phosphoserine" evidence="2">
    <location>
        <position position="735"/>
    </location>
</feature>